<keyword id="KW-0010">Activator</keyword>
<keyword id="KW-0025">Alternative splicing</keyword>
<keyword id="KW-0238">DNA-binding</keyword>
<keyword id="KW-1185">Reference proteome</keyword>
<keyword id="KW-0804">Transcription</keyword>
<keyword id="KW-0805">Transcription regulation</keyword>
<sequence length="209" mass="23124">MASKYPEEGPITEGVEEDFNSHSTSGLDLTSGNKEEPLISLALLSMHTSKIVVWIRDHFFVKILSFGGKQKLYYICNQCHKGIPESGYITLNTKYYLYEKGPTETGTKGLTLMRRHVQNSPCFLNSRKESGTPKTDPTRPATSYSLCRSDYQEAGCSRPTPSNSESVCNGLGQPSERGHTSGESGGIMEEVSFISWLEGLWGEGFDYAN</sequence>
<gene>
    <name type="primary">bel1</name>
    <name type="synonym">taf</name>
    <name type="synonym">tas</name>
</gene>
<proteinExistence type="inferred from homology"/>
<reference key="1">
    <citation type="journal article" date="1997" name="J. Virol.">
        <title>Characterization of the genome of feline foamy virus and its proteins shows distinct features different from those of primate Spumaviruses.</title>
        <authorList>
            <person name="Winkler I."/>
            <person name="Bodem J."/>
            <person name="Haas L."/>
            <person name="Zemba M."/>
            <person name="Delius H."/>
            <person name="Flower R."/>
            <person name="Fluegel R.M."/>
            <person name="Loechelt M."/>
        </authorList>
    </citation>
    <scope>NUCLEOTIDE SEQUENCE [GENOMIC DNA]</scope>
</reference>
<reference key="2">
    <citation type="journal article" date="1998" name="Virology">
        <title>Detection of subgenomic cDNAs and mapping of feline foamy virus mRNAs reveals complex patterns of transcription.</title>
        <authorList>
            <person name="Bodem J."/>
            <person name="Loechelt M."/>
            <person name="Delius H."/>
            <person name="Fluegel R.M."/>
        </authorList>
    </citation>
    <scope>NUCLEOTIDE SEQUENCE [GENOMIC RNA]</scope>
    <source>
        <strain>Isolate FUV</strain>
    </source>
</reference>
<protein>
    <recommendedName>
        <fullName>Protein Bel-1</fullName>
    </recommendedName>
    <alternativeName>
        <fullName>Transactivator of spumavirus</fullName>
        <shortName>Tas</shortName>
    </alternativeName>
    <alternativeName>
        <fullName>Transcriptional transactivator</fullName>
    </alternativeName>
</protein>
<feature type="chain" id="PRO_0000244970" description="Protein Bel-1">
    <location>
        <begin position="1"/>
        <end position="209"/>
    </location>
</feature>
<feature type="region of interest" description="Disordered" evidence="2">
    <location>
        <begin position="1"/>
        <end position="30"/>
    </location>
</feature>
<feature type="region of interest" description="Disordered" evidence="2">
    <location>
        <begin position="123"/>
        <end position="143"/>
    </location>
</feature>
<feature type="region of interest" description="Disordered" evidence="2">
    <location>
        <begin position="156"/>
        <end position="185"/>
    </location>
</feature>
<feature type="compositionally biased region" description="Polar residues" evidence="2">
    <location>
        <begin position="21"/>
        <end position="30"/>
    </location>
</feature>
<feature type="compositionally biased region" description="Polar residues" evidence="2">
    <location>
        <begin position="132"/>
        <end position="143"/>
    </location>
</feature>
<name>BEL1_FFV</name>
<organismHost>
    <name type="scientific">Felis catus</name>
    <name type="common">Cat</name>
    <name type="synonym">Felis silvestris catus</name>
    <dbReference type="NCBI Taxonomy" id="9685"/>
</organismHost>
<evidence type="ECO:0000250" key="1"/>
<evidence type="ECO:0000256" key="2">
    <source>
        <dbReference type="SAM" id="MobiDB-lite"/>
    </source>
</evidence>
<accession>O56862</accession>
<dbReference type="EMBL" id="Y08851">
    <property type="protein sequence ID" value="CAA70077.1"/>
    <property type="molecule type" value="Genomic_DNA"/>
</dbReference>
<dbReference type="EMBL" id="AJ223851">
    <property type="protein sequence ID" value="CAA11583.1"/>
    <property type="molecule type" value="Genomic_RNA"/>
</dbReference>
<dbReference type="RefSeq" id="NP_056917.1">
    <property type="nucleotide sequence ID" value="NC_001871.1"/>
</dbReference>
<dbReference type="RefSeq" id="YP_009513251.1">
    <molecule id="O56862-1"/>
    <property type="nucleotide sequence ID" value="NC_039242.1"/>
</dbReference>
<dbReference type="GeneID" id="37627273"/>
<dbReference type="Proteomes" id="UP000008763">
    <property type="component" value="Genome"/>
</dbReference>
<dbReference type="Proteomes" id="UP000201849">
    <property type="component" value="Genome"/>
</dbReference>
<dbReference type="GO" id="GO:0003677">
    <property type="term" value="F:DNA binding"/>
    <property type="evidence" value="ECO:0007669"/>
    <property type="project" value="UniProtKB-KW"/>
</dbReference>
<comment type="function">
    <text evidence="1">Transcriptional transactivator that activates the viral internal promoter (IP), thereby enhancing its own expression. This transactivation is repressed by nuclear factor I. Also transactivates the long terminal repeat (LTR) promoter, thereby inducing structural gene expression, initiating the late phase of infection. It is therefore a key regulator of viral gene expression. It directly binds to and activates DNA target sites of viral promoters and those of distinct cellular genes. Required for viral replication (By similarity).</text>
</comment>
<comment type="alternative products">
    <event type="alternative splicing"/>
    <isoform>
        <id>O56862-1</id>
        <name>Bel-1</name>
        <name>Bel1</name>
        <sequence type="displayed"/>
    </isoform>
    <isoform>
        <id>O93036-1</id>
        <name>Bet</name>
        <sequence type="external"/>
    </isoform>
    <isoform>
        <id>O93036-2</id>
        <name>Bel-2</name>
        <name>Bel2</name>
        <sequence type="external"/>
    </isoform>
    <text>The first 31 residues are shared by isoforms Bet and Bel-1, the last 356 residues are shared by isoforms Bet and Bel-2.</text>
</comment>
<organism>
    <name type="scientific">Feline foamy virus</name>
    <name type="common">FFV</name>
    <name type="synonym">Feline syncytial virus</name>
    <dbReference type="NCBI Taxonomy" id="53182"/>
    <lineage>
        <taxon>Viruses</taxon>
        <taxon>Riboviria</taxon>
        <taxon>Pararnavirae</taxon>
        <taxon>Artverviricota</taxon>
        <taxon>Revtraviricetes</taxon>
        <taxon>Ortervirales</taxon>
        <taxon>Retroviridae</taxon>
        <taxon>Spumaretrovirinae</taxon>
        <taxon>Felispumavirus</taxon>
    </lineage>
</organism>